<dbReference type="EMBL" id="U00096">
    <property type="protein sequence ID" value="AAC74766.1"/>
    <property type="molecule type" value="Genomic_DNA"/>
</dbReference>
<dbReference type="EMBL" id="AP009048">
    <property type="protein sequence ID" value="BAA15465.1"/>
    <property type="molecule type" value="Genomic_DNA"/>
</dbReference>
<dbReference type="PIR" id="H64927">
    <property type="entry name" value="H64927"/>
</dbReference>
<dbReference type="RefSeq" id="NP_416211.1">
    <property type="nucleotide sequence ID" value="NC_000913.3"/>
</dbReference>
<dbReference type="RefSeq" id="WP_000284799.1">
    <property type="nucleotide sequence ID" value="NZ_STEB01000003.1"/>
</dbReference>
<dbReference type="SMR" id="P77402"/>
<dbReference type="BioGRID" id="4260292">
    <property type="interactions" value="151"/>
</dbReference>
<dbReference type="DIP" id="DIP-11757N"/>
<dbReference type="FunCoup" id="P77402">
    <property type="interactions" value="21"/>
</dbReference>
<dbReference type="IntAct" id="P77402">
    <property type="interactions" value="1"/>
</dbReference>
<dbReference type="STRING" id="511145.b1696"/>
<dbReference type="PaxDb" id="511145-b1696"/>
<dbReference type="EnsemblBacteria" id="AAC74766">
    <property type="protein sequence ID" value="AAC74766"/>
    <property type="gene ID" value="b1696"/>
</dbReference>
<dbReference type="GeneID" id="945095"/>
<dbReference type="KEGG" id="ecj:JW1686"/>
<dbReference type="KEGG" id="eco:b1696"/>
<dbReference type="KEGG" id="ecoc:C3026_09710"/>
<dbReference type="PATRIC" id="fig|1411691.4.peg.562"/>
<dbReference type="EchoBASE" id="EB3732"/>
<dbReference type="eggNOG" id="COG1917">
    <property type="taxonomic scope" value="Bacteria"/>
</dbReference>
<dbReference type="eggNOG" id="COG2207">
    <property type="taxonomic scope" value="Bacteria"/>
</dbReference>
<dbReference type="HOGENOM" id="CLU_000445_88_6_6"/>
<dbReference type="InParanoid" id="P77402"/>
<dbReference type="OMA" id="MSEGHFC"/>
<dbReference type="OrthoDB" id="9814125at2"/>
<dbReference type="PhylomeDB" id="P77402"/>
<dbReference type="BioCyc" id="EcoCyc:G6919-MONOMER"/>
<dbReference type="PRO" id="PR:P77402"/>
<dbReference type="Proteomes" id="UP000000625">
    <property type="component" value="Chromosome"/>
</dbReference>
<dbReference type="GO" id="GO:0003700">
    <property type="term" value="F:DNA-binding transcription factor activity"/>
    <property type="evidence" value="ECO:0007669"/>
    <property type="project" value="InterPro"/>
</dbReference>
<dbReference type="GO" id="GO:0043565">
    <property type="term" value="F:sequence-specific DNA binding"/>
    <property type="evidence" value="ECO:0007669"/>
    <property type="project" value="InterPro"/>
</dbReference>
<dbReference type="CDD" id="cd02208">
    <property type="entry name" value="cupin_RmlC-like"/>
    <property type="match status" value="1"/>
</dbReference>
<dbReference type="FunFam" id="1.10.10.60:FF:000195">
    <property type="entry name" value="AraC family transcriptional regulator"/>
    <property type="match status" value="1"/>
</dbReference>
<dbReference type="Gene3D" id="1.10.10.60">
    <property type="entry name" value="Homeodomain-like"/>
    <property type="match status" value="2"/>
</dbReference>
<dbReference type="Gene3D" id="2.60.120.10">
    <property type="entry name" value="Jelly Rolls"/>
    <property type="match status" value="1"/>
</dbReference>
<dbReference type="InterPro" id="IPR013096">
    <property type="entry name" value="Cupin_2"/>
</dbReference>
<dbReference type="InterPro" id="IPR009057">
    <property type="entry name" value="Homeodomain-like_sf"/>
</dbReference>
<dbReference type="InterPro" id="IPR018060">
    <property type="entry name" value="HTH_AraC"/>
</dbReference>
<dbReference type="InterPro" id="IPR014710">
    <property type="entry name" value="RmlC-like_jellyroll"/>
</dbReference>
<dbReference type="InterPro" id="IPR011051">
    <property type="entry name" value="RmlC_Cupin_sf"/>
</dbReference>
<dbReference type="PANTHER" id="PTHR43280">
    <property type="entry name" value="ARAC-FAMILY TRANSCRIPTIONAL REGULATOR"/>
    <property type="match status" value="1"/>
</dbReference>
<dbReference type="PANTHER" id="PTHR43280:SF17">
    <property type="entry name" value="ARAC-TYPE DNA-BINDING DOMAIN-CONTAINING PROTEIN"/>
    <property type="match status" value="1"/>
</dbReference>
<dbReference type="Pfam" id="PF07883">
    <property type="entry name" value="Cupin_2"/>
    <property type="match status" value="1"/>
</dbReference>
<dbReference type="Pfam" id="PF12833">
    <property type="entry name" value="HTH_18"/>
    <property type="match status" value="1"/>
</dbReference>
<dbReference type="SMART" id="SM00342">
    <property type="entry name" value="HTH_ARAC"/>
    <property type="match status" value="1"/>
</dbReference>
<dbReference type="SUPFAM" id="SSF46689">
    <property type="entry name" value="Homeodomain-like"/>
    <property type="match status" value="2"/>
</dbReference>
<dbReference type="SUPFAM" id="SSF51182">
    <property type="entry name" value="RmlC-like cupins"/>
    <property type="match status" value="1"/>
</dbReference>
<dbReference type="PROSITE" id="PS01124">
    <property type="entry name" value="HTH_ARAC_FAMILY_2"/>
    <property type="match status" value="1"/>
</dbReference>
<organism>
    <name type="scientific">Escherichia coli (strain K12)</name>
    <dbReference type="NCBI Taxonomy" id="83333"/>
    <lineage>
        <taxon>Bacteria</taxon>
        <taxon>Pseudomonadati</taxon>
        <taxon>Pseudomonadota</taxon>
        <taxon>Gammaproteobacteria</taxon>
        <taxon>Enterobacterales</taxon>
        <taxon>Enterobacteriaceae</taxon>
        <taxon>Escherichia</taxon>
    </lineage>
</organism>
<evidence type="ECO:0000255" key="1">
    <source>
        <dbReference type="PROSITE-ProRule" id="PRU00593"/>
    </source>
</evidence>
<proteinExistence type="predicted"/>
<sequence length="303" mass="34894">MYQRCFDNASETLFVAGKTPRLSRFAFSDDPKWESGHHVHDNETELIYVKKGVARFTIDSSLYVAHADDIVVIERGRLHAVASDVNDPATTCTCALYGFQFQGAEENQLLQPHSCPVIAAGQGKEVIKTLFNELSVILPQSKNSQTSSLWDAFAYTLAILYYENFKNAYRSEQGYIKKDVLIKDILFYLNNNYREKITLEQLSKKFRASVSYICHEFTKEYRISPINYVIQRRMTEAKWSLTNTELSQAEISWRVGYENVDHFAKLFLRHVGCSPSDYRRQFKNCFAEQEILSEFPQPVSLVG</sequence>
<accession>P77402</accession>
<feature type="chain" id="PRO_0000194610" description="Uncharacterized HTH-type transcriptional regulator YdiP">
    <location>
        <begin position="1"/>
        <end position="303"/>
    </location>
</feature>
<feature type="domain" description="HTH araC/xylS-type" evidence="1">
    <location>
        <begin position="183"/>
        <end position="281"/>
    </location>
</feature>
<feature type="DNA-binding region" description="H-T-H motif" evidence="1">
    <location>
        <begin position="200"/>
        <end position="221"/>
    </location>
</feature>
<feature type="DNA-binding region" description="H-T-H motif" evidence="1">
    <location>
        <begin position="248"/>
        <end position="271"/>
    </location>
</feature>
<reference key="1">
    <citation type="journal article" date="1996" name="DNA Res.">
        <title>A 570-kb DNA sequence of the Escherichia coli K-12 genome corresponding to the 28.0-40.1 min region on the linkage map.</title>
        <authorList>
            <person name="Aiba H."/>
            <person name="Baba T."/>
            <person name="Fujita K."/>
            <person name="Hayashi K."/>
            <person name="Inada T."/>
            <person name="Isono K."/>
            <person name="Itoh T."/>
            <person name="Kasai H."/>
            <person name="Kashimoto K."/>
            <person name="Kimura S."/>
            <person name="Kitakawa M."/>
            <person name="Kitagawa M."/>
            <person name="Makino K."/>
            <person name="Miki T."/>
            <person name="Mizobuchi K."/>
            <person name="Mori H."/>
            <person name="Mori T."/>
            <person name="Motomura K."/>
            <person name="Nakade S."/>
            <person name="Nakamura Y."/>
            <person name="Nashimoto H."/>
            <person name="Nishio Y."/>
            <person name="Oshima T."/>
            <person name="Saito N."/>
            <person name="Sampei G."/>
            <person name="Seki Y."/>
            <person name="Sivasundaram S."/>
            <person name="Tagami H."/>
            <person name="Takeda J."/>
            <person name="Takemoto K."/>
            <person name="Takeuchi Y."/>
            <person name="Wada C."/>
            <person name="Yamamoto Y."/>
            <person name="Horiuchi T."/>
        </authorList>
    </citation>
    <scope>NUCLEOTIDE SEQUENCE [LARGE SCALE GENOMIC DNA]</scope>
    <source>
        <strain>K12 / W3110 / ATCC 27325 / DSM 5911</strain>
    </source>
</reference>
<reference key="2">
    <citation type="journal article" date="1997" name="Science">
        <title>The complete genome sequence of Escherichia coli K-12.</title>
        <authorList>
            <person name="Blattner F.R."/>
            <person name="Plunkett G. III"/>
            <person name="Bloch C.A."/>
            <person name="Perna N.T."/>
            <person name="Burland V."/>
            <person name="Riley M."/>
            <person name="Collado-Vides J."/>
            <person name="Glasner J.D."/>
            <person name="Rode C.K."/>
            <person name="Mayhew G.F."/>
            <person name="Gregor J."/>
            <person name="Davis N.W."/>
            <person name="Kirkpatrick H.A."/>
            <person name="Goeden M.A."/>
            <person name="Rose D.J."/>
            <person name="Mau B."/>
            <person name="Shao Y."/>
        </authorList>
    </citation>
    <scope>NUCLEOTIDE SEQUENCE [LARGE SCALE GENOMIC DNA]</scope>
    <source>
        <strain>K12 / MG1655 / ATCC 47076</strain>
    </source>
</reference>
<reference key="3">
    <citation type="journal article" date="2006" name="Mol. Syst. Biol.">
        <title>Highly accurate genome sequences of Escherichia coli K-12 strains MG1655 and W3110.</title>
        <authorList>
            <person name="Hayashi K."/>
            <person name="Morooka N."/>
            <person name="Yamamoto Y."/>
            <person name="Fujita K."/>
            <person name="Isono K."/>
            <person name="Choi S."/>
            <person name="Ohtsubo E."/>
            <person name="Baba T."/>
            <person name="Wanner B.L."/>
            <person name="Mori H."/>
            <person name="Horiuchi T."/>
        </authorList>
    </citation>
    <scope>NUCLEOTIDE SEQUENCE [LARGE SCALE GENOMIC DNA]</scope>
    <source>
        <strain>K12 / W3110 / ATCC 27325 / DSM 5911</strain>
    </source>
</reference>
<gene>
    <name type="primary">ydiP</name>
    <name type="ordered locus">b1696</name>
    <name type="ordered locus">JW1686</name>
</gene>
<protein>
    <recommendedName>
        <fullName>Uncharacterized HTH-type transcriptional regulator YdiP</fullName>
    </recommendedName>
</protein>
<keyword id="KW-0238">DNA-binding</keyword>
<keyword id="KW-1185">Reference proteome</keyword>
<keyword id="KW-0804">Transcription</keyword>
<keyword id="KW-0805">Transcription regulation</keyword>
<name>YDIP_ECOLI</name>